<keyword id="KW-0472">Membrane</keyword>
<keyword id="KW-0602">Photosynthesis</keyword>
<keyword id="KW-0604">Photosystem II</keyword>
<keyword id="KW-0934">Plastid</keyword>
<keyword id="KW-0674">Reaction center</keyword>
<keyword id="KW-0812">Transmembrane</keyword>
<keyword id="KW-1133">Transmembrane helix</keyword>
<reference key="1">
    <citation type="journal article" date="2007" name="BMC Plant Biol.">
        <title>Complete plastid genome sequences suggest strong selection for retention of photosynthetic genes in the parasitic plant genus Cuscuta.</title>
        <authorList>
            <person name="McNeal J.R."/>
            <person name="Kuehl J.V."/>
            <person name="Boore J.L."/>
            <person name="dePamphilis C.W."/>
        </authorList>
    </citation>
    <scope>NUCLEOTIDE SEQUENCE [LARGE SCALE GENOMIC DNA]</scope>
</reference>
<accession>A8W3I1</accession>
<geneLocation type="plastid"/>
<dbReference type="EMBL" id="EU189133">
    <property type="protein sequence ID" value="ABW20556.1"/>
    <property type="molecule type" value="Genomic_DNA"/>
</dbReference>
<dbReference type="RefSeq" id="YP_001531211.1">
    <property type="nucleotide sequence ID" value="NC_009949.1"/>
</dbReference>
<dbReference type="SMR" id="A8W3I1"/>
<dbReference type="GeneID" id="5714823"/>
<dbReference type="GO" id="GO:0009523">
    <property type="term" value="C:photosystem II"/>
    <property type="evidence" value="ECO:0007669"/>
    <property type="project" value="UniProtKB-KW"/>
</dbReference>
<dbReference type="GO" id="GO:0042170">
    <property type="term" value="C:plastid membrane"/>
    <property type="evidence" value="ECO:0007669"/>
    <property type="project" value="UniProtKB-SubCell"/>
</dbReference>
<dbReference type="GO" id="GO:0042651">
    <property type="term" value="C:thylakoid membrane"/>
    <property type="evidence" value="ECO:0007669"/>
    <property type="project" value="UniProtKB-UniRule"/>
</dbReference>
<dbReference type="GO" id="GO:0019684">
    <property type="term" value="P:photosynthesis, light reaction"/>
    <property type="evidence" value="ECO:0007669"/>
    <property type="project" value="InterPro"/>
</dbReference>
<dbReference type="HAMAP" id="MF_00438">
    <property type="entry name" value="PSII_PsbM"/>
    <property type="match status" value="1"/>
</dbReference>
<dbReference type="InterPro" id="IPR007826">
    <property type="entry name" value="PSII_PsbM"/>
</dbReference>
<dbReference type="InterPro" id="IPR037269">
    <property type="entry name" value="PSII_PsbM_sf"/>
</dbReference>
<dbReference type="NCBIfam" id="TIGR03038">
    <property type="entry name" value="PS_II_psbM"/>
    <property type="match status" value="1"/>
</dbReference>
<dbReference type="PANTHER" id="PTHR35774">
    <property type="entry name" value="PHOTOSYSTEM II REACTION CENTER PROTEIN M"/>
    <property type="match status" value="1"/>
</dbReference>
<dbReference type="PANTHER" id="PTHR35774:SF1">
    <property type="entry name" value="PHOTOSYSTEM II REACTION CENTER PROTEIN M"/>
    <property type="match status" value="1"/>
</dbReference>
<dbReference type="Pfam" id="PF05151">
    <property type="entry name" value="PsbM"/>
    <property type="match status" value="1"/>
</dbReference>
<dbReference type="SUPFAM" id="SSF161033">
    <property type="entry name" value="Photosystem II reaction center protein M, PsbM"/>
    <property type="match status" value="1"/>
</dbReference>
<sequence>MEVNILAFSATALLILFPTALLLILYVKTVSQNN</sequence>
<protein>
    <recommendedName>
        <fullName evidence="1">Photosystem II reaction center protein M</fullName>
        <shortName evidence="1">PSII-M</shortName>
    </recommendedName>
</protein>
<feature type="chain" id="PRO_0000325729" description="Photosystem II reaction center protein M">
    <location>
        <begin position="1"/>
        <end position="34"/>
    </location>
</feature>
<feature type="transmembrane region" description="Helical" evidence="1">
    <location>
        <begin position="5"/>
        <end position="25"/>
    </location>
</feature>
<organism>
    <name type="scientific">Cuscuta obtusiflora</name>
    <name type="common">Peruvian dodder</name>
    <dbReference type="NCBI Taxonomy" id="437280"/>
    <lineage>
        <taxon>Eukaryota</taxon>
        <taxon>Viridiplantae</taxon>
        <taxon>Streptophyta</taxon>
        <taxon>Embryophyta</taxon>
        <taxon>Tracheophyta</taxon>
        <taxon>Spermatophyta</taxon>
        <taxon>Magnoliopsida</taxon>
        <taxon>eudicotyledons</taxon>
        <taxon>Gunneridae</taxon>
        <taxon>Pentapetalae</taxon>
        <taxon>asterids</taxon>
        <taxon>lamiids</taxon>
        <taxon>Solanales</taxon>
        <taxon>Convolvulaceae</taxon>
        <taxon>Cuscuteae</taxon>
        <taxon>Cuscuta</taxon>
        <taxon>Cuscuta subgen. Grammica</taxon>
        <taxon>Cuscuta sect. Cleistogrammica</taxon>
    </lineage>
</organism>
<proteinExistence type="inferred from homology"/>
<comment type="function">
    <text evidence="1">One of the components of the core complex of photosystem II (PSII). PSII is a light-driven water:plastoquinone oxidoreductase that uses light energy to abstract electrons from H(2)O, generating O(2) and a proton gradient subsequently used for ATP formation. It consists of a core antenna complex that captures photons, and an electron transfer chain that converts photonic excitation into a charge separation. This subunit is found at the monomer-monomer interface.</text>
</comment>
<comment type="subunit">
    <text evidence="1">PSII is composed of 1 copy each of membrane proteins PsbA, PsbB, PsbC, PsbD, PsbE, PsbF, PsbH, PsbI, PsbJ, PsbK, PsbL, PsbM, PsbT, PsbX, PsbY, PsbZ, Psb30/Ycf12, at least 3 peripheral proteins of the oxygen-evolving complex and a large number of cofactors. It forms dimeric complexes.</text>
</comment>
<comment type="subcellular location">
    <subcellularLocation>
        <location evidence="2">Plastid membrane</location>
        <topology evidence="1">Single-pass membrane protein</topology>
    </subcellularLocation>
</comment>
<comment type="similarity">
    <text evidence="1">Belongs to the PsbM family.</text>
</comment>
<comment type="caution">
    <text evidence="2">Only inflorescences, fruits, starved seedlings and stressed stem tips are green in this organism.</text>
</comment>
<gene>
    <name evidence="1" type="primary">psbM</name>
</gene>
<name>PSBM_CUSOB</name>
<evidence type="ECO:0000255" key="1">
    <source>
        <dbReference type="HAMAP-Rule" id="MF_00438"/>
    </source>
</evidence>
<evidence type="ECO:0000305" key="2"/>